<organismHost>
    <name type="scientific">Homo sapiens</name>
    <name type="common">Human</name>
    <dbReference type="NCBI Taxonomy" id="9606"/>
</organismHost>
<sequence length="101" mass="11508">MEPVDPSLEPWKHPGSQPKTACTNCYCKKCCLHCQVCFTTKGLGISYGRKKRRQRRRPPQDSQTHQVSLPKQPSSQQRGDPTGPKESKKKVERETETDPDN</sequence>
<proteinExistence type="inferred from homology"/>
<dbReference type="EMBL" id="M38429">
    <property type="status" value="NOT_ANNOTATED_CDS"/>
    <property type="molecule type" value="Genomic_RNA"/>
</dbReference>
<dbReference type="SMR" id="P20879"/>
<dbReference type="Proteomes" id="UP000007695">
    <property type="component" value="Genome"/>
</dbReference>
<dbReference type="GO" id="GO:0005576">
    <property type="term" value="C:extracellular region"/>
    <property type="evidence" value="ECO:0007669"/>
    <property type="project" value="UniProtKB-SubCell"/>
</dbReference>
<dbReference type="GO" id="GO:0030430">
    <property type="term" value="C:host cell cytoplasm"/>
    <property type="evidence" value="ECO:0007669"/>
    <property type="project" value="UniProtKB-SubCell"/>
</dbReference>
<dbReference type="GO" id="GO:0044196">
    <property type="term" value="C:host cell nucleolus"/>
    <property type="evidence" value="ECO:0007669"/>
    <property type="project" value="UniProtKB-SubCell"/>
</dbReference>
<dbReference type="GO" id="GO:0042805">
    <property type="term" value="F:actinin binding"/>
    <property type="evidence" value="ECO:0007669"/>
    <property type="project" value="UniProtKB-UniRule"/>
</dbReference>
<dbReference type="GO" id="GO:0030332">
    <property type="term" value="F:cyclin binding"/>
    <property type="evidence" value="ECO:0000353"/>
    <property type="project" value="DisProt"/>
</dbReference>
<dbReference type="GO" id="GO:0035035">
    <property type="term" value="F:histone acetyltransferase binding"/>
    <property type="evidence" value="ECO:0000353"/>
    <property type="project" value="DisProt"/>
</dbReference>
<dbReference type="GO" id="GO:0046872">
    <property type="term" value="F:metal ion binding"/>
    <property type="evidence" value="ECO:0007669"/>
    <property type="project" value="UniProtKB-UniRule"/>
</dbReference>
<dbReference type="GO" id="GO:0031491">
    <property type="term" value="F:nucleosome binding"/>
    <property type="evidence" value="ECO:0000353"/>
    <property type="project" value="DisProt"/>
</dbReference>
<dbReference type="GO" id="GO:0019904">
    <property type="term" value="F:protein domain specific binding"/>
    <property type="evidence" value="ECO:0007669"/>
    <property type="project" value="UniProtKB-UniRule"/>
</dbReference>
<dbReference type="GO" id="GO:0004865">
    <property type="term" value="F:protein serine/threonine phosphatase inhibitor activity"/>
    <property type="evidence" value="ECO:0007669"/>
    <property type="project" value="UniProtKB-KW"/>
</dbReference>
<dbReference type="GO" id="GO:0001069">
    <property type="term" value="F:regulatory region RNA binding"/>
    <property type="evidence" value="ECO:0000269"/>
    <property type="project" value="DisProt"/>
</dbReference>
<dbReference type="GO" id="GO:0043175">
    <property type="term" value="F:RNA polymerase core enzyme binding"/>
    <property type="evidence" value="ECO:0000353"/>
    <property type="project" value="DisProt"/>
</dbReference>
<dbReference type="GO" id="GO:0001070">
    <property type="term" value="F:RNA-binding transcription regulator activity"/>
    <property type="evidence" value="ECO:0007669"/>
    <property type="project" value="UniProtKB-UniRule"/>
</dbReference>
<dbReference type="GO" id="GO:1990970">
    <property type="term" value="F:trans-activation response element binding"/>
    <property type="evidence" value="ECO:0000353"/>
    <property type="project" value="DisProt"/>
</dbReference>
<dbReference type="GO" id="GO:0001223">
    <property type="term" value="F:transcription coactivator binding"/>
    <property type="evidence" value="ECO:0000353"/>
    <property type="project" value="DisProt"/>
</dbReference>
<dbReference type="GO" id="GO:0006351">
    <property type="term" value="P:DNA-templated transcription"/>
    <property type="evidence" value="ECO:0007669"/>
    <property type="project" value="UniProtKB-UniRule"/>
</dbReference>
<dbReference type="GO" id="GO:0032968">
    <property type="term" value="P:positive regulation of transcription elongation by RNA polymerase II"/>
    <property type="evidence" value="ECO:0007669"/>
    <property type="project" value="UniProtKB-UniRule"/>
</dbReference>
<dbReference type="GO" id="GO:0050434">
    <property type="term" value="P:positive regulation of viral transcription"/>
    <property type="evidence" value="ECO:0007669"/>
    <property type="project" value="UniProtKB-UniRule"/>
</dbReference>
<dbReference type="GO" id="GO:0039525">
    <property type="term" value="P:symbiont-mediated perturbation of host chromatin organization"/>
    <property type="evidence" value="ECO:0007669"/>
    <property type="project" value="UniProtKB-UniRule"/>
</dbReference>
<dbReference type="GO" id="GO:0052170">
    <property type="term" value="P:symbiont-mediated suppression of host innate immune response"/>
    <property type="evidence" value="ECO:0007669"/>
    <property type="project" value="UniProtKB-KW"/>
</dbReference>
<dbReference type="GO" id="GO:0039606">
    <property type="term" value="P:symbiont-mediated suppression of host translation initiation"/>
    <property type="evidence" value="ECO:0007669"/>
    <property type="project" value="UniProtKB-KW"/>
</dbReference>
<dbReference type="GO" id="GO:0039502">
    <property type="term" value="P:symbiont-mediated suppression of host type I interferon-mediated signaling pathway"/>
    <property type="evidence" value="ECO:0007669"/>
    <property type="project" value="UniProtKB-UniRule"/>
</dbReference>
<dbReference type="GO" id="GO:0019080">
    <property type="term" value="P:viral gene expression"/>
    <property type="evidence" value="ECO:0000270"/>
    <property type="project" value="DisProt"/>
</dbReference>
<dbReference type="FunFam" id="4.10.20.10:FF:000001">
    <property type="entry name" value="Protein Tat"/>
    <property type="match status" value="1"/>
</dbReference>
<dbReference type="Gene3D" id="4.10.20.10">
    <property type="entry name" value="Tat domain"/>
    <property type="match status" value="1"/>
</dbReference>
<dbReference type="HAMAP" id="MF_04079">
    <property type="entry name" value="HIV_TAT"/>
    <property type="match status" value="1"/>
</dbReference>
<dbReference type="InterPro" id="IPR001831">
    <property type="entry name" value="IV_Tat"/>
</dbReference>
<dbReference type="InterPro" id="IPR036963">
    <property type="entry name" value="Tat_dom_sf"/>
</dbReference>
<dbReference type="Pfam" id="PF00539">
    <property type="entry name" value="Tat"/>
    <property type="match status" value="1"/>
</dbReference>
<dbReference type="PRINTS" id="PR00055">
    <property type="entry name" value="HIVTATDOMAIN"/>
</dbReference>
<comment type="function">
    <text evidence="1">Transcriptional activator that increases RNA Pol II processivity, thereby increasing the level of full-length viral transcripts. Recognizes a hairpin structure at the 5'-LTR of the nascent viral mRNAs referred to as the transactivation responsive RNA element (TAR) and recruits the cyclin T1-CDK9 complex (P-TEFb complex) that will in turn hyperphosphorylate the RNA polymerase II to allow efficient elongation. The CDK9 component of P-TEFb and other Tat-activated kinases hyperphosphorylate the C-terminus of RNA Pol II that becomes stabilized and much more processive. Other factors such as HTATSF1/Tat-SF1, SUPT5H/SPT5, and HTATIP2 are also important for Tat's function. Besides its effect on RNA Pol II processivity, Tat induces chromatin remodeling of proviral genes by recruiting the histone acetyltransferases (HATs) CREBBP, EP300 and PCAF to the chromatin. This also contributes to the increase in proviral transcription rate, especially when the provirus integrates in transcriptionally silent region of the host genome. To ensure maximal activation of the LTR, Tat mediates nuclear translocation of NF-kappa-B by interacting with host RELA. Through its interaction with host TBP, Tat may also modulate transcription initiation. Tat can reactivate a latently infected cell by penetrating in it and transactivating its LTR promoter. In the cytoplasm, Tat is thought to act as a translational activator of HIV-1 mRNAs.</text>
</comment>
<comment type="function">
    <text evidence="1">Extracellular circulating Tat can be endocytosed by surrounding uninfected cells via the binding to several surface receptors such as CD26, CXCR4, heparan sulfate proteoglycans (HSPG) or LDLR. Neurons are rarely infected, but they internalize Tat via their LDLR. Through its interaction with nuclear HATs, Tat is potentially able to control the acetylation-dependent cellular gene expression. Modulates the expression of many cellular genes involved in cell survival, proliferation or in coding for cytokines or cytokine receptors. Tat plays a role in T-cell and neurons apoptosis. Tat induced neurotoxicity and apoptosis probably contribute to neuroAIDS. Circulating Tat also acts as a chemokine-like and/or growth factor-like molecule that binds to specific receptors on the surface of the cells, affecting many cellular pathways. In the vascular system, Tat binds to ITGAV/ITGB3 and ITGA5/ITGB1 integrins dimers at the surface of endothelial cells and competes with bFGF for heparin-binding sites, leading to an excess of soluble bFGF.</text>
</comment>
<comment type="subunit">
    <text evidence="1">Interacts with host CCNT1. Associates with the P-TEFb complex composed at least of Tat, P-TEFb (CDK9 and CCNT1), TAR RNA, RNA Pol II. Recruits the HATs CREBBP, TAF1/TFIID, EP300, PCAF and GCN5L2. Interacts with host KAT5/Tip60; this interaction targets the latter to degradation. Interacts with the host deacetylase SIRT1. Interacts with host capping enzyme RNGTT; this interaction stimulates RNGTT. Binds to host KDR, and to the host integrins ITGAV/ITGB3 and ITGA5/ITGB1. Interacts with host KPNB1/importin beta-1 without previous binding to KPNA1/importin alpha-1. Interacts with EIF2AK2. Interacts with host nucleosome assembly protein NAP1L1; this interaction may be required for the transport of Tat within the nucleus, since the two proteins interact at the nuclear rim. Interacts with host C1QBP/SF2P32; this interaction involves lysine-acetylated Tat. Interacts with the host chemokine receptors CCR2, CCR3 and CXCR4. Interacts with host DPP4/CD26; this interaction may trigger an anti-proliferative effect. Interacts with host LDLR. Interacts with the host extracellular matrix metalloproteinase MMP1. Interacts with host PRMT6; this interaction mediates Tat's methylation. Interacts with, and is ubiquitinated by MDM2/Hdm2. Interacts with host PSMC3 and HTATIP2. Interacts with STAB1; this interaction may overcome SATB1-mediated repression of IL2 and IL2RA (interleukin) in T cells by binding to the same domain than HDAC1. Interacts (when acetylated) with human CDK13, thereby increasing HIV-1 mRNA splicing and promoting the production of the doubly spliced HIV-1 protein Nef. Interacts with host TBP; this interaction modulates the activity of transcriptional pre-initiation complex. Interacts with host RELA. Interacts with host PLSCR1; this interaction negatively regulates Tat transactivation activity by altering its subcellular distribution.</text>
</comment>
<comment type="subcellular location">
    <subcellularLocation>
        <location evidence="1">Host nucleus</location>
        <location evidence="1">Host nucleolus</location>
    </subcellularLocation>
    <subcellularLocation>
        <location evidence="1">Host cytoplasm</location>
    </subcellularLocation>
    <subcellularLocation>
        <location evidence="1">Secreted</location>
    </subcellularLocation>
    <text evidence="1">Probably localizes to both nuclear and nucleolar compartments. Nuclear localization is mediated through the interaction of the nuclear localization signal with importin KPNB1. Secretion occurs through a Golgi-independent pathway. Tat is released from infected cells to the extracellular space where it remains associated to the cell membrane, or is secreted into the cerebrospinal fluid and sera. Extracellular Tat can be endocytosed by surrounding uninfected cells via binding to several receptors depending on the cell type.</text>
</comment>
<comment type="alternative products">
    <event type="alternative splicing"/>
    <isoform>
        <id>P20879-1</id>
        <name>Long</name>
        <sequence type="displayed"/>
    </isoform>
    <isoform>
        <id>P20879-2</id>
        <name>Short</name>
        <sequence type="described" ref="VSP_022413"/>
    </isoform>
</comment>
<comment type="domain">
    <text evidence="1">The cell attachment site mediates the interaction with ITGAV/ITGB3 and ITGA5/ITGB1 integrins, leading to vascular cell migration and invasion. This interaction also provides endothelial cells with the adhesion signal they require to grow in response to mitogens.</text>
</comment>
<comment type="domain">
    <text evidence="1">The Cys-rich region may bind 2 zinc ions. This region is involved in binding to KAT5.</text>
</comment>
<comment type="domain">
    <text evidence="1">The transactivation domain mediates the interaction with CCNT1, GCN5L2, and MDM2.</text>
</comment>
<comment type="domain">
    <text evidence="1">The Arg-rich RNA-binding region binds the TAR RNA. This region also mediates the nuclear localization through direct binding to KPNB1 and is involved in Tat's transfer across cell membranes (protein transduction). The same region is required for the interaction with EP300, PCAF, EIF2AK2 and KDR.</text>
</comment>
<comment type="PTM">
    <text evidence="1">Asymmetrical arginine methylation by host PRMT6 seems to diminish the transactivation capacity of Tat and affects the interaction with host CCNT1.</text>
</comment>
<comment type="PTM">
    <text evidence="1">Acetylation by EP300, CREBBP, GCN5L2/GCN5 and PCAF regulates the transactivation activity of Tat. EP300-mediated acetylation of Lys-50 promotes dissociation of Tat from the TAR RNA through the competitive binding to PCAF's bromodomain. In addition, the non-acetylated Tat's N-terminus can also interact with PCAF. PCAF-mediated acetylation of Lys-28 enhances Tat's binding to CCNT1. Lys-50 is deacetylated by SIRT1.</text>
</comment>
<comment type="PTM">
    <text evidence="1">Polyubiquitination by host MDM2 does not target Tat to degradation, but activates its transactivation function and fosters interaction with CCNT1 and TAR RNA.</text>
</comment>
<comment type="PTM">
    <text evidence="1">Phosphorylated by EIF2AK2 on serine and threonine residues adjacent to the basic region important for TAR RNA binding and function. Phosphorylation of Tat by EIF2AK2 is dependent on the prior activation of EIF2AK2 by dsRNA.</text>
</comment>
<comment type="miscellaneous">
    <text evidence="1">HIV-1 lineages are divided in three main groups, M (for Major), O (for Outlier), and N (for New, or Non-M, Non-O). The vast majority of strains found worldwide belong to the group M. Group O seems to be endemic to and largely confined to Cameroon and neighboring countries in West Central Africa, where these viruses represent a small minority of HIV-1 strains. The group N is represented by a limited number of isolates from Cameroonian persons. The group M is further subdivided in 9 clades or subtypes (A to D, F to H, J and K).</text>
</comment>
<comment type="miscellaneous">
    <molecule>Isoform Short</molecule>
    <text evidence="3">Expressed in the late stage of the infection cycle, when unspliced viral RNAs are exported to the cytoplasm by the viral Rev protein.</text>
</comment>
<comment type="similarity">
    <text evidence="1">Belongs to the lentiviruses Tat family.</text>
</comment>
<keyword id="KW-0007">Acetylation</keyword>
<keyword id="KW-0010">Activator</keyword>
<keyword id="KW-0014">AIDS</keyword>
<keyword id="KW-0025">Alternative splicing</keyword>
<keyword id="KW-0053">Apoptosis</keyword>
<keyword id="KW-1035">Host cytoplasm</keyword>
<keyword id="KW-1048">Host nucleus</keyword>
<keyword id="KW-0945">Host-virus interaction</keyword>
<keyword id="KW-1090">Inhibition of host innate immune response by virus</keyword>
<keyword id="KW-1114">Inhibition of host interferon signaling pathway by virus</keyword>
<keyword id="KW-0922">Interferon antiviral system evasion</keyword>
<keyword id="KW-1017">Isopeptide bond</keyword>
<keyword id="KW-0479">Metal-binding</keyword>
<keyword id="KW-0488">Methylation</keyword>
<keyword id="KW-1122">Modulation of host chromatin by virus</keyword>
<keyword id="KW-1126">Modulation of host PP1 activity by virus</keyword>
<keyword id="KW-0597">Phosphoprotein</keyword>
<keyword id="KW-0694">RNA-binding</keyword>
<keyword id="KW-0964">Secreted</keyword>
<keyword id="KW-0804">Transcription</keyword>
<keyword id="KW-0805">Transcription regulation</keyword>
<keyword id="KW-0832">Ubl conjugation</keyword>
<keyword id="KW-0899">Viral immunoevasion</keyword>
<keyword id="KW-0862">Zinc</keyword>
<accession>P20879</accession>
<organism>
    <name type="scientific">Human immunodeficiency virus type 1 group M subtype B (isolate JRCSF)</name>
    <name type="common">HIV-1</name>
    <dbReference type="NCBI Taxonomy" id="11688"/>
    <lineage>
        <taxon>Viruses</taxon>
        <taxon>Riboviria</taxon>
        <taxon>Pararnavirae</taxon>
        <taxon>Artverviricota</taxon>
        <taxon>Revtraviricetes</taxon>
        <taxon>Ortervirales</taxon>
        <taxon>Retroviridae</taxon>
        <taxon>Orthoretrovirinae</taxon>
        <taxon>Lentivirus</taxon>
        <taxon>Human immunodeficiency virus type 1</taxon>
    </lineage>
</organism>
<feature type="chain" id="PRO_0000085348" description="Protein Tat">
    <location>
        <begin position="1"/>
        <end position="101"/>
    </location>
</feature>
<feature type="region of interest" description="Transactivation" evidence="1">
    <location>
        <begin position="1"/>
        <end position="48"/>
    </location>
</feature>
<feature type="region of interest" description="Interaction with human CREBBP" evidence="1">
    <location>
        <begin position="1"/>
        <end position="24"/>
    </location>
</feature>
<feature type="region of interest" description="Disordered" evidence="2">
    <location>
        <begin position="1"/>
        <end position="20"/>
    </location>
</feature>
<feature type="region of interest" description="Cysteine-rich" evidence="1">
    <location>
        <begin position="22"/>
        <end position="37"/>
    </location>
</feature>
<feature type="region of interest" description="Core" evidence="1">
    <location>
        <begin position="38"/>
        <end position="48"/>
    </location>
</feature>
<feature type="region of interest" description="Disordered" evidence="2">
    <location>
        <begin position="45"/>
        <end position="101"/>
    </location>
</feature>
<feature type="region of interest" description="Interaction with the host capping enzyme RNGTT" evidence="1">
    <location>
        <begin position="49"/>
        <end position="86"/>
    </location>
</feature>
<feature type="short sequence motif" description="Nuclear localization signal, RNA-binding (TAR), and protein transduction" evidence="1">
    <location>
        <begin position="49"/>
        <end position="57"/>
    </location>
</feature>
<feature type="short sequence motif" description="Cell attachment site" evidence="1">
    <location>
        <begin position="78"/>
        <end position="80"/>
    </location>
</feature>
<feature type="compositionally biased region" description="Basic residues" evidence="2">
    <location>
        <begin position="48"/>
        <end position="57"/>
    </location>
</feature>
<feature type="compositionally biased region" description="Polar residues" evidence="2">
    <location>
        <begin position="61"/>
        <end position="79"/>
    </location>
</feature>
<feature type="compositionally biased region" description="Basic and acidic residues" evidence="2">
    <location>
        <begin position="83"/>
        <end position="101"/>
    </location>
</feature>
<feature type="binding site" evidence="1">
    <location>
        <position position="22"/>
    </location>
    <ligand>
        <name>Zn(2+)</name>
        <dbReference type="ChEBI" id="CHEBI:29105"/>
        <label>1</label>
    </ligand>
</feature>
<feature type="binding site" evidence="1">
    <location>
        <position position="25"/>
    </location>
    <ligand>
        <name>Zn(2+)</name>
        <dbReference type="ChEBI" id="CHEBI:29105"/>
        <label>2</label>
    </ligand>
</feature>
<feature type="binding site" evidence="1">
    <location>
        <position position="27"/>
    </location>
    <ligand>
        <name>Zn(2+)</name>
        <dbReference type="ChEBI" id="CHEBI:29105"/>
        <label>2</label>
    </ligand>
</feature>
<feature type="binding site" evidence="1">
    <location>
        <position position="30"/>
    </location>
    <ligand>
        <name>Zn(2+)</name>
        <dbReference type="ChEBI" id="CHEBI:29105"/>
        <label>2</label>
    </ligand>
</feature>
<feature type="binding site" evidence="1">
    <location>
        <position position="33"/>
    </location>
    <ligand>
        <name>Zn(2+)</name>
        <dbReference type="ChEBI" id="CHEBI:29105"/>
        <label>1</label>
    </ligand>
</feature>
<feature type="binding site" evidence="1">
    <location>
        <position position="34"/>
    </location>
    <ligand>
        <name>Zn(2+)</name>
        <dbReference type="ChEBI" id="CHEBI:29105"/>
        <label>1</label>
    </ligand>
</feature>
<feature type="binding site" evidence="1">
    <location>
        <position position="37"/>
    </location>
    <ligand>
        <name>Zn(2+)</name>
        <dbReference type="ChEBI" id="CHEBI:29105"/>
        <label>1</label>
    </ligand>
</feature>
<feature type="site" description="Essential for Tat translocation through the endosomal membrane" evidence="1">
    <location>
        <position position="11"/>
    </location>
</feature>
<feature type="modified residue" description="N6-acetyllysine; by host PCAF" evidence="1">
    <location>
        <position position="28"/>
    </location>
</feature>
<feature type="modified residue" description="N6-acetyllysine; by host EP300 and GCN5L2" evidence="1">
    <location>
        <position position="50"/>
    </location>
</feature>
<feature type="modified residue" description="N6-acetyllysine; by host EP300 and GCN5L2" evidence="1">
    <location>
        <position position="51"/>
    </location>
</feature>
<feature type="modified residue" description="Asymmetric dimethylarginine; by host PRMT6" evidence="1">
    <location>
        <position position="52"/>
    </location>
</feature>
<feature type="modified residue" description="Asymmetric dimethylarginine; by host PRMT6" evidence="1">
    <location>
        <position position="53"/>
    </location>
</feature>
<feature type="cross-link" description="Glycyl lysine isopeptide (Lys-Gly) (interchain with G-Cter in ubiquitin)" evidence="1">
    <location>
        <position position="71"/>
    </location>
</feature>
<feature type="splice variant" id="VSP_022413" description="In isoform Short.">
    <location>
        <begin position="73"/>
        <end position="101"/>
    </location>
</feature>
<name>TAT_HV1JR</name>
<reference key="1">
    <citation type="submission" date="1988-12" db="EMBL/GenBank/DDBJ databases">
        <authorList>
            <person name="Koyanagi S."/>
            <person name="Chen I.S.Y."/>
        </authorList>
    </citation>
    <scope>NUCLEOTIDE SEQUENCE [GENOMIC RNA]</scope>
</reference>
<reference key="2">
    <citation type="journal article" date="2005" name="Microbes Infect.">
        <title>Decoding Tat: the biology of HIV Tat posttranslational modifications.</title>
        <authorList>
            <person name="Hetzer C."/>
            <person name="Dormeyer W."/>
            <person name="Schnolzer M."/>
            <person name="Ott M."/>
        </authorList>
    </citation>
    <scope>REVIEW</scope>
    <scope>ALTERNATIVE SPLICING</scope>
</reference>
<reference key="3">
    <citation type="journal article" date="2006" name="Front. Biosci.">
        <title>The multiple functions of HIV-1 Tat: proliferation versus apoptosis.</title>
        <authorList>
            <person name="Peruzzi F."/>
        </authorList>
    </citation>
    <scope>REVIEW</scope>
</reference>
<reference key="4">
    <citation type="journal article" date="2006" name="Microbes Infect.">
        <title>HIV tat and neurotoxicity.</title>
        <authorList>
            <person name="King J.E."/>
            <person name="Eugenin E.A."/>
            <person name="Buckner C.M."/>
            <person name="Berman J.W."/>
        </authorList>
    </citation>
    <scope>REVIEW</scope>
</reference>
<gene>
    <name evidence="1" type="primary">tat</name>
</gene>
<protein>
    <recommendedName>
        <fullName evidence="1">Protein Tat</fullName>
    </recommendedName>
    <alternativeName>
        <fullName evidence="1">Transactivating regulatory protein</fullName>
    </alternativeName>
</protein>
<evidence type="ECO:0000255" key="1">
    <source>
        <dbReference type="HAMAP-Rule" id="MF_04079"/>
    </source>
</evidence>
<evidence type="ECO:0000256" key="2">
    <source>
        <dbReference type="SAM" id="MobiDB-lite"/>
    </source>
</evidence>
<evidence type="ECO:0000305" key="3"/>